<reference key="1">
    <citation type="journal article" date="2007" name="J. Proteome Res.">
        <title>Diversity of toxic components from the venom of the evolutionarily distinct black whip snake, Demansia vestigiata.</title>
        <authorList>
            <person name="St Pierre L."/>
            <person name="Birrell G.W."/>
            <person name="Earl S.T.H."/>
            <person name="Wallis T.P."/>
            <person name="Gorman J.J."/>
            <person name="de Jersey J."/>
            <person name="Masci P.P."/>
            <person name="Lavin M.F."/>
        </authorList>
    </citation>
    <scope>NUCLEOTIDE SEQUENCE [MRNA]</scope>
    <source>
        <tissue>Venom gland</tissue>
    </source>
</reference>
<reference key="2">
    <citation type="journal article" date="2008" name="Cell. Mol. Life Sci.">
        <title>Common evolution of waprin and Kunitz-like toxin families in Australian venomous snakes.</title>
        <authorList>
            <person name="St Pierre L."/>
            <person name="Earl S.T."/>
            <person name="Filippovich I."/>
            <person name="Sorokina N."/>
            <person name="Masci P.P."/>
            <person name="De Jersey J."/>
            <person name="Lavin M.F."/>
        </authorList>
    </citation>
    <scope>NUCLEOTIDE SEQUENCE [GENOMIC DNA]</scope>
    <source>
        <tissue>Venom gland</tissue>
    </source>
</reference>
<accession>A6MFL2</accession>
<feature type="signal peptide" evidence="2">
    <location>
        <begin position="1"/>
        <end position="24"/>
    </location>
</feature>
<feature type="chain" id="PRO_5000254116" description="Kunitz-type serine protease inhibitor vestiginin-2">
    <location>
        <begin position="25"/>
        <end position="83"/>
    </location>
</feature>
<feature type="domain" description="BPTI/Kunitz inhibitor" evidence="3">
    <location>
        <begin position="31"/>
        <end position="81"/>
    </location>
</feature>
<feature type="site" description="Reactive bond for chymotrypsin" evidence="1">
    <location>
        <begin position="41"/>
        <end position="42"/>
    </location>
</feature>
<feature type="disulfide bond" evidence="3">
    <location>
        <begin position="31"/>
        <end position="81"/>
    </location>
</feature>
<feature type="disulfide bond" evidence="3">
    <location>
        <begin position="40"/>
        <end position="64"/>
    </location>
</feature>
<feature type="disulfide bond" evidence="3">
    <location>
        <begin position="56"/>
        <end position="77"/>
    </location>
</feature>
<proteinExistence type="evidence at transcript level"/>
<comment type="function">
    <text evidence="1">Serine protease inhibitor.</text>
</comment>
<comment type="subcellular location">
    <subcellularLocation>
        <location evidence="1">Secreted</location>
    </subcellularLocation>
</comment>
<comment type="tissue specificity">
    <text>Expressed by the venom gland.</text>
</comment>
<comment type="similarity">
    <text evidence="4">Belongs to the venom Kunitz-type family.</text>
</comment>
<keyword id="KW-1015">Disulfide bond</keyword>
<keyword id="KW-0646">Protease inhibitor</keyword>
<keyword id="KW-0964">Secreted</keyword>
<keyword id="KW-0722">Serine protease inhibitor</keyword>
<keyword id="KW-0732">Signal</keyword>
<sequence length="83" mass="9174">MSSGGLLLLLGLLTLWAELTPVSSKDRPEFCELPPDRGTCMGYSQAFYYNPSQNKCLPFMFGGCKANPNNFKTLEECKRTCAA</sequence>
<dbReference type="EMBL" id="DQ917523">
    <property type="protein sequence ID" value="ABK63552.1"/>
    <property type="molecule type" value="mRNA"/>
</dbReference>
<dbReference type="EMBL" id="EU401859">
    <property type="protein sequence ID" value="ACC77808.1"/>
    <property type="molecule type" value="Genomic_DNA"/>
</dbReference>
<dbReference type="SMR" id="A6MFL2"/>
<dbReference type="MEROPS" id="I02.052"/>
<dbReference type="GO" id="GO:0005615">
    <property type="term" value="C:extracellular space"/>
    <property type="evidence" value="ECO:0007669"/>
    <property type="project" value="TreeGrafter"/>
</dbReference>
<dbReference type="GO" id="GO:0004867">
    <property type="term" value="F:serine-type endopeptidase inhibitor activity"/>
    <property type="evidence" value="ECO:0007669"/>
    <property type="project" value="UniProtKB-KW"/>
</dbReference>
<dbReference type="CDD" id="cd22594">
    <property type="entry name" value="Kunitz_textilinin-like"/>
    <property type="match status" value="1"/>
</dbReference>
<dbReference type="FunFam" id="4.10.410.10:FF:000020">
    <property type="entry name" value="Collagen, type VI, alpha 3"/>
    <property type="match status" value="1"/>
</dbReference>
<dbReference type="Gene3D" id="4.10.410.10">
    <property type="entry name" value="Pancreatic trypsin inhibitor Kunitz domain"/>
    <property type="match status" value="1"/>
</dbReference>
<dbReference type="InterPro" id="IPR002223">
    <property type="entry name" value="Kunitz_BPTI"/>
</dbReference>
<dbReference type="InterPro" id="IPR036880">
    <property type="entry name" value="Kunitz_BPTI_sf"/>
</dbReference>
<dbReference type="InterPro" id="IPR020901">
    <property type="entry name" value="Prtase_inh_Kunz-CS"/>
</dbReference>
<dbReference type="InterPro" id="IPR050098">
    <property type="entry name" value="TFPI/VKTCI-like"/>
</dbReference>
<dbReference type="PANTHER" id="PTHR10083:SF374">
    <property type="entry name" value="BPTI_KUNITZ INHIBITOR DOMAIN-CONTAINING PROTEIN"/>
    <property type="match status" value="1"/>
</dbReference>
<dbReference type="PANTHER" id="PTHR10083">
    <property type="entry name" value="KUNITZ-TYPE PROTEASE INHIBITOR-RELATED"/>
    <property type="match status" value="1"/>
</dbReference>
<dbReference type="Pfam" id="PF00014">
    <property type="entry name" value="Kunitz_BPTI"/>
    <property type="match status" value="1"/>
</dbReference>
<dbReference type="PRINTS" id="PR00759">
    <property type="entry name" value="BASICPTASE"/>
</dbReference>
<dbReference type="SMART" id="SM00131">
    <property type="entry name" value="KU"/>
    <property type="match status" value="1"/>
</dbReference>
<dbReference type="SUPFAM" id="SSF57362">
    <property type="entry name" value="BPTI-like"/>
    <property type="match status" value="1"/>
</dbReference>
<dbReference type="PROSITE" id="PS00280">
    <property type="entry name" value="BPTI_KUNITZ_1"/>
    <property type="match status" value="1"/>
</dbReference>
<dbReference type="PROSITE" id="PS50279">
    <property type="entry name" value="BPTI_KUNITZ_2"/>
    <property type="match status" value="1"/>
</dbReference>
<name>VKT2_DEMVE</name>
<evidence type="ECO:0000250" key="1"/>
<evidence type="ECO:0000255" key="2"/>
<evidence type="ECO:0000255" key="3">
    <source>
        <dbReference type="PROSITE-ProRule" id="PRU00031"/>
    </source>
</evidence>
<evidence type="ECO:0000305" key="4"/>
<protein>
    <recommendedName>
        <fullName>Kunitz-type serine protease inhibitor vestiginin-2</fullName>
    </recommendedName>
</protein>
<organism>
    <name type="scientific">Demansia vestigiata</name>
    <name type="common">Lesser black whip snake</name>
    <name type="synonym">Demansia atra</name>
    <dbReference type="NCBI Taxonomy" id="412038"/>
    <lineage>
        <taxon>Eukaryota</taxon>
        <taxon>Metazoa</taxon>
        <taxon>Chordata</taxon>
        <taxon>Craniata</taxon>
        <taxon>Vertebrata</taxon>
        <taxon>Euteleostomi</taxon>
        <taxon>Lepidosauria</taxon>
        <taxon>Squamata</taxon>
        <taxon>Bifurcata</taxon>
        <taxon>Unidentata</taxon>
        <taxon>Episquamata</taxon>
        <taxon>Toxicofera</taxon>
        <taxon>Serpentes</taxon>
        <taxon>Colubroidea</taxon>
        <taxon>Elapidae</taxon>
        <taxon>Notechinae</taxon>
        <taxon>Demansia</taxon>
    </lineage>
</organism>